<dbReference type="EC" id="3.2.2.22"/>
<dbReference type="GO" id="GO:0030598">
    <property type="term" value="F:rRNA N-glycosylase activity"/>
    <property type="evidence" value="ECO:0000314"/>
    <property type="project" value="UniProtKB"/>
</dbReference>
<dbReference type="GO" id="GO:0090729">
    <property type="term" value="F:toxin activity"/>
    <property type="evidence" value="ECO:0007669"/>
    <property type="project" value="UniProtKB-KW"/>
</dbReference>
<dbReference type="GO" id="GO:0017148">
    <property type="term" value="P:negative regulation of translation"/>
    <property type="evidence" value="ECO:0000314"/>
    <property type="project" value="UniProtKB"/>
</dbReference>
<proteinExistence type="evidence at protein level"/>
<accession>P83245</accession>
<reference key="1">
    <citation type="journal article" date="2001" name="Biochem. Biophys. Res. Commun.">
        <title>Isolation of pleuturegin, a novel ribosome-inactivating protein from fresh sclerotia of the edible mushroom Pleurotus tuber-regium.</title>
        <authorList>
            <person name="Wang H.X."/>
            <person name="Ng T.B."/>
        </authorList>
    </citation>
    <scope>PROTEIN SEQUENCE</scope>
    <scope>FUNCTION</scope>
    <source>
        <tissue>Sclerotium</tissue>
    </source>
</reference>
<organism>
    <name type="scientific">Pleurotus tuber-regium</name>
    <name type="common">King tuber oyster mushroom</name>
    <name type="synonym">Lentinus tuber-regium</name>
    <dbReference type="NCBI Taxonomy" id="716892"/>
    <lineage>
        <taxon>Eukaryota</taxon>
        <taxon>Fungi</taxon>
        <taxon>Dikarya</taxon>
        <taxon>Basidiomycota</taxon>
        <taxon>Agaricomycotina</taxon>
        <taxon>Agaricomycetes</taxon>
        <taxon>Agaricomycetidae</taxon>
        <taxon>Agaricales</taxon>
        <taxon>Pleurotineae</taxon>
        <taxon>Pleurotaceae</taxon>
        <taxon>Pleurotus</taxon>
    </lineage>
</organism>
<protein>
    <recommendedName>
        <fullName>Ribosome-inactivating protein pleuturegin</fullName>
        <ecNumber>3.2.2.22</ecNumber>
    </recommendedName>
    <alternativeName>
        <fullName>rRNA N-glycosidase</fullName>
    </alternativeName>
</protein>
<sequence length="28" mass="2961">ARTQPGNIAPVGDFTLYPNAPRQGHIVA</sequence>
<comment type="function">
    <text evidence="1">Inhibits protein synthesis in animal cells. Does not possess ribonuclease activity.</text>
</comment>
<comment type="catalytic activity">
    <reaction>
        <text>Endohydrolysis of the N-glycosidic bond at one specific adenosine on the 28S rRNA.</text>
        <dbReference type="EC" id="3.2.2.22"/>
    </reaction>
</comment>
<comment type="similarity">
    <text evidence="2">Belongs to the ribosome-inactivating protein family.</text>
</comment>
<keyword id="KW-0903">Direct protein sequencing</keyword>
<keyword id="KW-0378">Hydrolase</keyword>
<keyword id="KW-0652">Protein synthesis inhibitor</keyword>
<keyword id="KW-0800">Toxin</keyword>
<feature type="chain" id="PRO_0000221421" description="Ribosome-inactivating protein pleuturegin">
    <location>
        <begin position="1"/>
        <end position="28" status="greater than"/>
    </location>
</feature>
<feature type="non-terminal residue">
    <location>
        <position position="28"/>
    </location>
</feature>
<evidence type="ECO:0000269" key="1">
    <source>
    </source>
</evidence>
<evidence type="ECO:0000305" key="2"/>
<name>RIP_PLETG</name>